<organism>
    <name type="scientific">Burkholderia pseudomallei (strain 1710b)</name>
    <dbReference type="NCBI Taxonomy" id="320372"/>
    <lineage>
        <taxon>Bacteria</taxon>
        <taxon>Pseudomonadati</taxon>
        <taxon>Pseudomonadota</taxon>
        <taxon>Betaproteobacteria</taxon>
        <taxon>Burkholderiales</taxon>
        <taxon>Burkholderiaceae</taxon>
        <taxon>Burkholderia</taxon>
        <taxon>pseudomallei group</taxon>
    </lineage>
</organism>
<comment type="function">
    <text evidence="1">Catalyzes the phosphorylation of the position 2 hydroxy group of 4-diphosphocytidyl-2C-methyl-D-erythritol.</text>
</comment>
<comment type="catalytic activity">
    <reaction evidence="1">
        <text>4-CDP-2-C-methyl-D-erythritol + ATP = 4-CDP-2-C-methyl-D-erythritol 2-phosphate + ADP + H(+)</text>
        <dbReference type="Rhea" id="RHEA:18437"/>
        <dbReference type="ChEBI" id="CHEBI:15378"/>
        <dbReference type="ChEBI" id="CHEBI:30616"/>
        <dbReference type="ChEBI" id="CHEBI:57823"/>
        <dbReference type="ChEBI" id="CHEBI:57919"/>
        <dbReference type="ChEBI" id="CHEBI:456216"/>
        <dbReference type="EC" id="2.7.1.148"/>
    </reaction>
</comment>
<comment type="pathway">
    <text evidence="1">Isoprenoid biosynthesis; isopentenyl diphosphate biosynthesis via DXP pathway; isopentenyl diphosphate from 1-deoxy-D-xylulose 5-phosphate: step 3/6.</text>
</comment>
<comment type="similarity">
    <text evidence="1">Belongs to the GHMP kinase family. IspE subfamily.</text>
</comment>
<evidence type="ECO:0000255" key="1">
    <source>
        <dbReference type="HAMAP-Rule" id="MF_00061"/>
    </source>
</evidence>
<name>ISPE_BURP1</name>
<reference key="1">
    <citation type="journal article" date="2010" name="Genome Biol. Evol.">
        <title>Continuing evolution of Burkholderia mallei through genome reduction and large-scale rearrangements.</title>
        <authorList>
            <person name="Losada L."/>
            <person name="Ronning C.M."/>
            <person name="DeShazer D."/>
            <person name="Woods D."/>
            <person name="Fedorova N."/>
            <person name="Kim H.S."/>
            <person name="Shabalina S.A."/>
            <person name="Pearson T.R."/>
            <person name="Brinkac L."/>
            <person name="Tan P."/>
            <person name="Nandi T."/>
            <person name="Crabtree J."/>
            <person name="Badger J."/>
            <person name="Beckstrom-Sternberg S."/>
            <person name="Saqib M."/>
            <person name="Schutzer S.E."/>
            <person name="Keim P."/>
            <person name="Nierman W.C."/>
        </authorList>
    </citation>
    <scope>NUCLEOTIDE SEQUENCE [LARGE SCALE GENOMIC DNA]</scope>
    <source>
        <strain>1710b</strain>
    </source>
</reference>
<dbReference type="EC" id="2.7.1.148" evidence="1"/>
<dbReference type="EMBL" id="CP000124">
    <property type="protein sequence ID" value="ABA49490.1"/>
    <property type="molecule type" value="Genomic_DNA"/>
</dbReference>
<dbReference type="SMR" id="Q3JW85"/>
<dbReference type="EnsemblBacteria" id="ABA49490">
    <property type="protein sequence ID" value="ABA49490"/>
    <property type="gene ID" value="BURPS1710b_0755"/>
</dbReference>
<dbReference type="KEGG" id="bpm:BURPS1710b_0755"/>
<dbReference type="HOGENOM" id="CLU_053057_3_0_4"/>
<dbReference type="UniPathway" id="UPA00056">
    <property type="reaction ID" value="UER00094"/>
</dbReference>
<dbReference type="Proteomes" id="UP000002700">
    <property type="component" value="Chromosome I"/>
</dbReference>
<dbReference type="GO" id="GO:0050515">
    <property type="term" value="F:4-(cytidine 5'-diphospho)-2-C-methyl-D-erythritol kinase activity"/>
    <property type="evidence" value="ECO:0007669"/>
    <property type="project" value="UniProtKB-UniRule"/>
</dbReference>
<dbReference type="GO" id="GO:0005524">
    <property type="term" value="F:ATP binding"/>
    <property type="evidence" value="ECO:0007669"/>
    <property type="project" value="UniProtKB-UniRule"/>
</dbReference>
<dbReference type="GO" id="GO:0019288">
    <property type="term" value="P:isopentenyl diphosphate biosynthetic process, methylerythritol 4-phosphate pathway"/>
    <property type="evidence" value="ECO:0007669"/>
    <property type="project" value="UniProtKB-UniRule"/>
</dbReference>
<dbReference type="GO" id="GO:0016114">
    <property type="term" value="P:terpenoid biosynthetic process"/>
    <property type="evidence" value="ECO:0007669"/>
    <property type="project" value="InterPro"/>
</dbReference>
<dbReference type="Gene3D" id="3.30.230.10">
    <property type="match status" value="1"/>
</dbReference>
<dbReference type="Gene3D" id="3.30.70.890">
    <property type="entry name" value="GHMP kinase, C-terminal domain"/>
    <property type="match status" value="1"/>
</dbReference>
<dbReference type="HAMAP" id="MF_00061">
    <property type="entry name" value="IspE"/>
    <property type="match status" value="1"/>
</dbReference>
<dbReference type="InterPro" id="IPR013750">
    <property type="entry name" value="GHMP_kinase_C_dom"/>
</dbReference>
<dbReference type="InterPro" id="IPR036554">
    <property type="entry name" value="GHMP_kinase_C_sf"/>
</dbReference>
<dbReference type="InterPro" id="IPR006204">
    <property type="entry name" value="GHMP_kinase_N_dom"/>
</dbReference>
<dbReference type="InterPro" id="IPR004424">
    <property type="entry name" value="IspE"/>
</dbReference>
<dbReference type="InterPro" id="IPR020568">
    <property type="entry name" value="Ribosomal_Su5_D2-typ_SF"/>
</dbReference>
<dbReference type="InterPro" id="IPR014721">
    <property type="entry name" value="Ribsml_uS5_D2-typ_fold_subgr"/>
</dbReference>
<dbReference type="NCBIfam" id="TIGR00154">
    <property type="entry name" value="ispE"/>
    <property type="match status" value="1"/>
</dbReference>
<dbReference type="NCBIfam" id="NF011202">
    <property type="entry name" value="PRK14608.1"/>
    <property type="match status" value="1"/>
</dbReference>
<dbReference type="PANTHER" id="PTHR43527">
    <property type="entry name" value="4-DIPHOSPHOCYTIDYL-2-C-METHYL-D-ERYTHRITOL KINASE, CHLOROPLASTIC"/>
    <property type="match status" value="1"/>
</dbReference>
<dbReference type="PANTHER" id="PTHR43527:SF2">
    <property type="entry name" value="4-DIPHOSPHOCYTIDYL-2-C-METHYL-D-ERYTHRITOL KINASE, CHLOROPLASTIC"/>
    <property type="match status" value="1"/>
</dbReference>
<dbReference type="Pfam" id="PF08544">
    <property type="entry name" value="GHMP_kinases_C"/>
    <property type="match status" value="1"/>
</dbReference>
<dbReference type="Pfam" id="PF00288">
    <property type="entry name" value="GHMP_kinases_N"/>
    <property type="match status" value="1"/>
</dbReference>
<dbReference type="PIRSF" id="PIRSF010376">
    <property type="entry name" value="IspE"/>
    <property type="match status" value="1"/>
</dbReference>
<dbReference type="SUPFAM" id="SSF55060">
    <property type="entry name" value="GHMP Kinase, C-terminal domain"/>
    <property type="match status" value="1"/>
</dbReference>
<dbReference type="SUPFAM" id="SSF54211">
    <property type="entry name" value="Ribosomal protein S5 domain 2-like"/>
    <property type="match status" value="1"/>
</dbReference>
<protein>
    <recommendedName>
        <fullName evidence="1">4-diphosphocytidyl-2-C-methyl-D-erythritol kinase</fullName>
        <shortName evidence="1">CMK</shortName>
        <ecNumber evidence="1">2.7.1.148</ecNumber>
    </recommendedName>
    <alternativeName>
        <fullName evidence="1">4-(cytidine-5'-diphospho)-2-C-methyl-D-erythritol kinase</fullName>
    </alternativeName>
</protein>
<sequence>MPSMTDTTRSLRDCLAPAKLNLFLHITGRRPDGYHALQSVFQLLDWGDRLHFTLRDDGKVSRVTDVPGVPEESDLVVRAASLLKAHAGATLGVDIEIDKRLPMGAGLGGGSSDAATTLLALNRLWRLDLPRTTLQSLAVKLGADVPFFVFGKNAFAEGIGEALQAVELPARWFLVVTPRVHVPTAAIFSEKSLTRDSKPITITDFLAQRGIDAGWPDSFGRNDMQPVVTSKYAEVAKVVEWFYNLTPARMTGSGASVFAAFKSKADAEAAQAKLPAGWNSAVAESMSEHPLFAFAS</sequence>
<accession>Q3JW85</accession>
<keyword id="KW-0067">ATP-binding</keyword>
<keyword id="KW-0414">Isoprene biosynthesis</keyword>
<keyword id="KW-0418">Kinase</keyword>
<keyword id="KW-0547">Nucleotide-binding</keyword>
<keyword id="KW-0808">Transferase</keyword>
<proteinExistence type="inferred from homology"/>
<feature type="chain" id="PRO_0000235075" description="4-diphosphocytidyl-2-C-methyl-D-erythritol kinase">
    <location>
        <begin position="1"/>
        <end position="296"/>
    </location>
</feature>
<feature type="active site" evidence="1">
    <location>
        <position position="19"/>
    </location>
</feature>
<feature type="active site" evidence="1">
    <location>
        <position position="144"/>
    </location>
</feature>
<feature type="binding site" evidence="1">
    <location>
        <begin position="102"/>
        <end position="112"/>
    </location>
    <ligand>
        <name>ATP</name>
        <dbReference type="ChEBI" id="CHEBI:30616"/>
    </ligand>
</feature>
<gene>
    <name evidence="1" type="primary">ispE</name>
    <name type="ordered locus">BURPS1710b_0755</name>
</gene>